<accession>A5GMU7</accession>
<sequence>MVRVRLAPSPTGTLHIGTARTAVFNWLFARNQNGSFLLRIEDTDKERSKPEFTQNILEGLQWLGLDWDGDPVIQSEQTERHRSAIQTLLEKGLAYRCYASEEELDAMRTQQKAANQAPRYDNRHRDLTPEQEAAFQAEGRDAVIRFRIDEHREIRWNDLVRGPMLWRGADLGGDMVVARRAPADQIGDPLYNLVVVIDDAAMAISHVIRGEDHIANTAKQLLLYEALSLPVPTFAHAPLILNPEGRKLSKRDGVTSINDFRAMGYTPEALANYMTLLGWSVPEGMNEIFTLEAAAKVFDFDRVNKAGAKFDWDKLNWLNAQVLHSWEPANLLNALAPLWADQGWTLPDTTGWSLSLVELLGPSLTLLNDGVDQAKPFFMEPALEDDALKQLDQEGAKACLQALLSTLEEAPWSGESIDQAQEMLKSAAATAGVKKGILMKSLRAALLGRLQGPDLLTTWSLLAQIGQDLPRLRRCL</sequence>
<organism>
    <name type="scientific">Synechococcus sp. (strain WH7803)</name>
    <dbReference type="NCBI Taxonomy" id="32051"/>
    <lineage>
        <taxon>Bacteria</taxon>
        <taxon>Bacillati</taxon>
        <taxon>Cyanobacteriota</taxon>
        <taxon>Cyanophyceae</taxon>
        <taxon>Synechococcales</taxon>
        <taxon>Synechococcaceae</taxon>
        <taxon>Synechococcus</taxon>
    </lineage>
</organism>
<evidence type="ECO:0000255" key="1">
    <source>
        <dbReference type="HAMAP-Rule" id="MF_00022"/>
    </source>
</evidence>
<feature type="chain" id="PRO_1000001979" description="Glutamate--tRNA ligase">
    <location>
        <begin position="1"/>
        <end position="476"/>
    </location>
</feature>
<feature type="short sequence motif" description="'HIGH' region" evidence="1">
    <location>
        <begin position="8"/>
        <end position="18"/>
    </location>
</feature>
<feature type="short sequence motif" description="'KMSKS' region" evidence="1">
    <location>
        <begin position="247"/>
        <end position="251"/>
    </location>
</feature>
<feature type="binding site" evidence="1">
    <location>
        <position position="250"/>
    </location>
    <ligand>
        <name>ATP</name>
        <dbReference type="ChEBI" id="CHEBI:30616"/>
    </ligand>
</feature>
<gene>
    <name evidence="1" type="primary">gltX</name>
    <name type="ordered locus">SynWH7803_1836</name>
</gene>
<comment type="function">
    <text evidence="1">Catalyzes the attachment of glutamate to tRNA(Glu) in a two-step reaction: glutamate is first activated by ATP to form Glu-AMP and then transferred to the acceptor end of tRNA(Glu).</text>
</comment>
<comment type="catalytic activity">
    <reaction evidence="1">
        <text>tRNA(Glu) + L-glutamate + ATP = L-glutamyl-tRNA(Glu) + AMP + diphosphate</text>
        <dbReference type="Rhea" id="RHEA:23540"/>
        <dbReference type="Rhea" id="RHEA-COMP:9663"/>
        <dbReference type="Rhea" id="RHEA-COMP:9680"/>
        <dbReference type="ChEBI" id="CHEBI:29985"/>
        <dbReference type="ChEBI" id="CHEBI:30616"/>
        <dbReference type="ChEBI" id="CHEBI:33019"/>
        <dbReference type="ChEBI" id="CHEBI:78442"/>
        <dbReference type="ChEBI" id="CHEBI:78520"/>
        <dbReference type="ChEBI" id="CHEBI:456215"/>
        <dbReference type="EC" id="6.1.1.17"/>
    </reaction>
</comment>
<comment type="subunit">
    <text evidence="1">Monomer.</text>
</comment>
<comment type="subcellular location">
    <subcellularLocation>
        <location evidence="1">Cytoplasm</location>
    </subcellularLocation>
</comment>
<comment type="similarity">
    <text evidence="1">Belongs to the class-I aminoacyl-tRNA synthetase family. Glutamate--tRNA ligase type 1 subfamily.</text>
</comment>
<keyword id="KW-0030">Aminoacyl-tRNA synthetase</keyword>
<keyword id="KW-0067">ATP-binding</keyword>
<keyword id="KW-0963">Cytoplasm</keyword>
<keyword id="KW-0436">Ligase</keyword>
<keyword id="KW-0547">Nucleotide-binding</keyword>
<keyword id="KW-0648">Protein biosynthesis</keyword>
<keyword id="KW-1185">Reference proteome</keyword>
<name>SYE_SYNPW</name>
<reference key="1">
    <citation type="submission" date="2006-05" db="EMBL/GenBank/DDBJ databases">
        <authorList>
            <consortium name="Genoscope"/>
        </authorList>
    </citation>
    <scope>NUCLEOTIDE SEQUENCE [LARGE SCALE GENOMIC DNA]</scope>
    <source>
        <strain>WH7803</strain>
    </source>
</reference>
<proteinExistence type="inferred from homology"/>
<protein>
    <recommendedName>
        <fullName evidence="1">Glutamate--tRNA ligase</fullName>
        <ecNumber evidence="1">6.1.1.17</ecNumber>
    </recommendedName>
    <alternativeName>
        <fullName evidence="1">Glutamyl-tRNA synthetase</fullName>
        <shortName evidence="1">GluRS</shortName>
    </alternativeName>
</protein>
<dbReference type="EC" id="6.1.1.17" evidence="1"/>
<dbReference type="EMBL" id="CT971583">
    <property type="protein sequence ID" value="CAK24262.1"/>
    <property type="molecule type" value="Genomic_DNA"/>
</dbReference>
<dbReference type="SMR" id="A5GMU7"/>
<dbReference type="STRING" id="32051.SynWH7803_1836"/>
<dbReference type="KEGG" id="syx:SynWH7803_1836"/>
<dbReference type="eggNOG" id="COG0008">
    <property type="taxonomic scope" value="Bacteria"/>
</dbReference>
<dbReference type="HOGENOM" id="CLU_015768_6_0_3"/>
<dbReference type="OrthoDB" id="9807503at2"/>
<dbReference type="Proteomes" id="UP000001566">
    <property type="component" value="Chromosome"/>
</dbReference>
<dbReference type="GO" id="GO:0005829">
    <property type="term" value="C:cytosol"/>
    <property type="evidence" value="ECO:0007669"/>
    <property type="project" value="TreeGrafter"/>
</dbReference>
<dbReference type="GO" id="GO:0005524">
    <property type="term" value="F:ATP binding"/>
    <property type="evidence" value="ECO:0007669"/>
    <property type="project" value="UniProtKB-UniRule"/>
</dbReference>
<dbReference type="GO" id="GO:0004818">
    <property type="term" value="F:glutamate-tRNA ligase activity"/>
    <property type="evidence" value="ECO:0007669"/>
    <property type="project" value="UniProtKB-UniRule"/>
</dbReference>
<dbReference type="GO" id="GO:0000049">
    <property type="term" value="F:tRNA binding"/>
    <property type="evidence" value="ECO:0007669"/>
    <property type="project" value="InterPro"/>
</dbReference>
<dbReference type="GO" id="GO:0008270">
    <property type="term" value="F:zinc ion binding"/>
    <property type="evidence" value="ECO:0007669"/>
    <property type="project" value="InterPro"/>
</dbReference>
<dbReference type="GO" id="GO:0006424">
    <property type="term" value="P:glutamyl-tRNA aminoacylation"/>
    <property type="evidence" value="ECO:0007669"/>
    <property type="project" value="UniProtKB-UniRule"/>
</dbReference>
<dbReference type="CDD" id="cd00808">
    <property type="entry name" value="GluRS_core"/>
    <property type="match status" value="1"/>
</dbReference>
<dbReference type="FunFam" id="3.40.50.620:FF:000007">
    <property type="entry name" value="Glutamate--tRNA ligase"/>
    <property type="match status" value="1"/>
</dbReference>
<dbReference type="Gene3D" id="1.10.10.350">
    <property type="match status" value="1"/>
</dbReference>
<dbReference type="Gene3D" id="1.10.8.70">
    <property type="entry name" value="Glutamate-tRNA synthetase, class I, anticodon-binding domain 1"/>
    <property type="match status" value="1"/>
</dbReference>
<dbReference type="Gene3D" id="1.10.1160.10">
    <property type="entry name" value="Glutamyl-trna Synthetase, Domain 2"/>
    <property type="match status" value="1"/>
</dbReference>
<dbReference type="Gene3D" id="3.90.800.10">
    <property type="entry name" value="Glutamyl-tRNA Synthetase, Domain 3"/>
    <property type="match status" value="1"/>
</dbReference>
<dbReference type="Gene3D" id="3.40.50.620">
    <property type="entry name" value="HUPs"/>
    <property type="match status" value="1"/>
</dbReference>
<dbReference type="HAMAP" id="MF_00022">
    <property type="entry name" value="Glu_tRNA_synth_type1"/>
    <property type="match status" value="1"/>
</dbReference>
<dbReference type="InterPro" id="IPR045462">
    <property type="entry name" value="aa-tRNA-synth_I_cd-bd"/>
</dbReference>
<dbReference type="InterPro" id="IPR020751">
    <property type="entry name" value="aa-tRNA-synth_I_codon-bd_sub2"/>
</dbReference>
<dbReference type="InterPro" id="IPR001412">
    <property type="entry name" value="aa-tRNA-synth_I_CS"/>
</dbReference>
<dbReference type="InterPro" id="IPR008925">
    <property type="entry name" value="aa_tRNA-synth_I_cd-bd_sf"/>
</dbReference>
<dbReference type="InterPro" id="IPR004527">
    <property type="entry name" value="Glu-tRNA-ligase_bac/mito"/>
</dbReference>
<dbReference type="InterPro" id="IPR020752">
    <property type="entry name" value="Glu-tRNA-synth_I_codon-bd_sub1"/>
</dbReference>
<dbReference type="InterPro" id="IPR000924">
    <property type="entry name" value="Glu/Gln-tRNA-synth"/>
</dbReference>
<dbReference type="InterPro" id="IPR020058">
    <property type="entry name" value="Glu/Gln-tRNA-synth_Ib_cat-dom"/>
</dbReference>
<dbReference type="InterPro" id="IPR020061">
    <property type="entry name" value="Glu_tRNA_lig_a-bdl"/>
</dbReference>
<dbReference type="InterPro" id="IPR049940">
    <property type="entry name" value="GluQ/Sye"/>
</dbReference>
<dbReference type="InterPro" id="IPR033910">
    <property type="entry name" value="GluRS_core"/>
</dbReference>
<dbReference type="InterPro" id="IPR014729">
    <property type="entry name" value="Rossmann-like_a/b/a_fold"/>
</dbReference>
<dbReference type="NCBIfam" id="TIGR00464">
    <property type="entry name" value="gltX_bact"/>
    <property type="match status" value="1"/>
</dbReference>
<dbReference type="NCBIfam" id="NF004315">
    <property type="entry name" value="PRK05710.1-4"/>
    <property type="match status" value="1"/>
</dbReference>
<dbReference type="PANTHER" id="PTHR43311">
    <property type="entry name" value="GLUTAMATE--TRNA LIGASE"/>
    <property type="match status" value="1"/>
</dbReference>
<dbReference type="PANTHER" id="PTHR43311:SF2">
    <property type="entry name" value="GLUTAMATE--TRNA LIGASE, MITOCHONDRIAL-RELATED"/>
    <property type="match status" value="1"/>
</dbReference>
<dbReference type="Pfam" id="PF19269">
    <property type="entry name" value="Anticodon_2"/>
    <property type="match status" value="1"/>
</dbReference>
<dbReference type="Pfam" id="PF00749">
    <property type="entry name" value="tRNA-synt_1c"/>
    <property type="match status" value="1"/>
</dbReference>
<dbReference type="PRINTS" id="PR00987">
    <property type="entry name" value="TRNASYNTHGLU"/>
</dbReference>
<dbReference type="SUPFAM" id="SSF48163">
    <property type="entry name" value="An anticodon-binding domain of class I aminoacyl-tRNA synthetases"/>
    <property type="match status" value="1"/>
</dbReference>
<dbReference type="SUPFAM" id="SSF52374">
    <property type="entry name" value="Nucleotidylyl transferase"/>
    <property type="match status" value="1"/>
</dbReference>
<dbReference type="PROSITE" id="PS00178">
    <property type="entry name" value="AA_TRNA_LIGASE_I"/>
    <property type="match status" value="1"/>
</dbReference>